<gene>
    <name evidence="1" type="primary">psbL</name>
</gene>
<organism>
    <name type="scientific">Nicotiana sylvestris</name>
    <name type="common">Wood tobacco</name>
    <name type="synonym">South American tobacco</name>
    <dbReference type="NCBI Taxonomy" id="4096"/>
    <lineage>
        <taxon>Eukaryota</taxon>
        <taxon>Viridiplantae</taxon>
        <taxon>Streptophyta</taxon>
        <taxon>Embryophyta</taxon>
        <taxon>Tracheophyta</taxon>
        <taxon>Spermatophyta</taxon>
        <taxon>Magnoliopsida</taxon>
        <taxon>eudicotyledons</taxon>
        <taxon>Gunneridae</taxon>
        <taxon>Pentapetalae</taxon>
        <taxon>asterids</taxon>
        <taxon>lamiids</taxon>
        <taxon>Solanales</taxon>
        <taxon>Solanaceae</taxon>
        <taxon>Nicotianoideae</taxon>
        <taxon>Nicotianeae</taxon>
        <taxon>Nicotiana</taxon>
    </lineage>
</organism>
<name>PSBL_NICSY</name>
<protein>
    <recommendedName>
        <fullName evidence="1">Photosystem II reaction center protein L</fullName>
        <shortName evidence="1">PSII-L</shortName>
    </recommendedName>
</protein>
<accession>P60145</accession>
<accession>O47030</accession>
<accession>P12166</accession>
<accession>P12167</accession>
<accession>Q34007</accession>
<accession>Q3C1I5</accession>
<comment type="function">
    <text evidence="1">One of the components of the core complex of photosystem II (PSII). PSII is a light-driven water:plastoquinone oxidoreductase that uses light energy to abstract electrons from H(2)O, generating O(2) and a proton gradient subsequently used for ATP formation. It consists of a core antenna complex that captures photons, and an electron transfer chain that converts photonic excitation into a charge separation. This subunit is found at the monomer-monomer interface and is required for correct PSII assembly and/or dimerization.</text>
</comment>
<comment type="subunit">
    <text evidence="1">PSII is composed of 1 copy each of membrane proteins PsbA, PsbB, PsbC, PsbD, PsbE, PsbF, PsbH, PsbI, PsbJ, PsbK, PsbL, PsbM, PsbT, PsbX, PsbY, PsbZ, Psb30/Ycf12, at least 3 peripheral proteins of the oxygen-evolving complex and a large number of cofactors. It forms dimeric complexes.</text>
</comment>
<comment type="subcellular location">
    <subcellularLocation>
        <location evidence="1">Plastid</location>
        <location evidence="1">Chloroplast thylakoid membrane</location>
        <topology evidence="1">Single-pass membrane protein</topology>
    </subcellularLocation>
</comment>
<comment type="RNA editing">
    <location>
        <position position="1" evidence="2"/>
    </location>
    <text>The initiator methionine is created by RNA editing.</text>
</comment>
<comment type="similarity">
    <text evidence="1">Belongs to the PsbL family.</text>
</comment>
<keyword id="KW-0150">Chloroplast</keyword>
<keyword id="KW-0472">Membrane</keyword>
<keyword id="KW-0602">Photosynthesis</keyword>
<keyword id="KW-0604">Photosystem II</keyword>
<keyword id="KW-0934">Plastid</keyword>
<keyword id="KW-0674">Reaction center</keyword>
<keyword id="KW-1185">Reference proteome</keyword>
<keyword id="KW-0691">RNA editing</keyword>
<keyword id="KW-0793">Thylakoid</keyword>
<keyword id="KW-0812">Transmembrane</keyword>
<keyword id="KW-1133">Transmembrane helix</keyword>
<sequence>MTQSNPNEQNVELNRTSLYWGLLLIFVLAVLFSNYFFN</sequence>
<reference key="1">
    <citation type="journal article" date="2003" name="Mol. Biol. Evol.">
        <title>Identification of RNA editing sites in chloroplast transcripts from the maternal and paternal progenitors of tobacco (Nicotiana tabacum): comparative analysis shows the involvement of distinct trans-factors for ndhB editing.</title>
        <authorList>
            <person name="Sasaki T."/>
            <person name="Yukawa Y."/>
            <person name="Miyamoto T."/>
            <person name="Obokata J."/>
            <person name="Sugiura M."/>
        </authorList>
    </citation>
    <scope>NUCLEOTIDE SEQUENCE [GENOMIC DNA]</scope>
    <scope>RNA EDITING OF INITIATOR CODON</scope>
    <source>
        <tissue>Leaf</tissue>
    </source>
</reference>
<reference key="2">
    <citation type="journal article" date="2006" name="Mol. Genet. Genomics">
        <title>The chloroplast genome of Nicotiana sylvestris and Nicotiana tomentosiformis: complete sequencing confirms that the Nicotiana sylvestris progenitor is the maternal genome donor of Nicotiana tabacum.</title>
        <authorList>
            <person name="Yukawa M."/>
            <person name="Tsudzuki T."/>
            <person name="Sugiura M."/>
        </authorList>
    </citation>
    <scope>NUCLEOTIDE SEQUENCE [LARGE SCALE GENOMIC DNA]</scope>
</reference>
<feature type="chain" id="PRO_0000219747" description="Photosystem II reaction center protein L">
    <location>
        <begin position="1"/>
        <end position="38"/>
    </location>
</feature>
<feature type="transmembrane region" description="Helical" evidence="1">
    <location>
        <begin position="17"/>
        <end position="37"/>
    </location>
</feature>
<proteinExistence type="evidence at transcript level"/>
<evidence type="ECO:0000255" key="1">
    <source>
        <dbReference type="HAMAP-Rule" id="MF_01317"/>
    </source>
</evidence>
<evidence type="ECO:0000269" key="2">
    <source>
    </source>
</evidence>
<dbReference type="EMBL" id="AB098218">
    <property type="protein sequence ID" value="BAC77556.1"/>
    <property type="molecule type" value="Genomic_DNA"/>
</dbReference>
<dbReference type="EMBL" id="AB237912">
    <property type="protein sequence ID" value="BAE46668.1"/>
    <property type="molecule type" value="Genomic_DNA"/>
</dbReference>
<dbReference type="RefSeq" id="YP_358693.1">
    <property type="nucleotide sequence ID" value="NC_007500.1"/>
</dbReference>
<dbReference type="SMR" id="P60145"/>
<dbReference type="GeneID" id="3735111"/>
<dbReference type="KEGG" id="nsy:3735111"/>
<dbReference type="OrthoDB" id="18721at4085"/>
<dbReference type="Proteomes" id="UP000189701">
    <property type="component" value="Chloroplast Pltd"/>
</dbReference>
<dbReference type="GO" id="GO:0009535">
    <property type="term" value="C:chloroplast thylakoid membrane"/>
    <property type="evidence" value="ECO:0007669"/>
    <property type="project" value="UniProtKB-SubCell"/>
</dbReference>
<dbReference type="GO" id="GO:0009539">
    <property type="term" value="C:photosystem II reaction center"/>
    <property type="evidence" value="ECO:0007669"/>
    <property type="project" value="InterPro"/>
</dbReference>
<dbReference type="GO" id="GO:0015979">
    <property type="term" value="P:photosynthesis"/>
    <property type="evidence" value="ECO:0007669"/>
    <property type="project" value="UniProtKB-UniRule"/>
</dbReference>
<dbReference type="HAMAP" id="MF_01317">
    <property type="entry name" value="PSII_PsbL"/>
    <property type="match status" value="1"/>
</dbReference>
<dbReference type="InterPro" id="IPR003372">
    <property type="entry name" value="PSII_PsbL"/>
</dbReference>
<dbReference type="InterPro" id="IPR037266">
    <property type="entry name" value="PSII_PsbL_sf"/>
</dbReference>
<dbReference type="NCBIfam" id="NF001972">
    <property type="entry name" value="PRK00753.1"/>
    <property type="match status" value="1"/>
</dbReference>
<dbReference type="Pfam" id="PF02419">
    <property type="entry name" value="PsbL"/>
    <property type="match status" value="1"/>
</dbReference>
<dbReference type="SUPFAM" id="SSF161017">
    <property type="entry name" value="Photosystem II reaction center protein L, PsbL"/>
    <property type="match status" value="1"/>
</dbReference>
<geneLocation type="chloroplast"/>